<organism>
    <name type="scientific">Methylobacillus flagellatus (strain ATCC 51484 / DSM 6875 / VKM B-1610 / KT)</name>
    <dbReference type="NCBI Taxonomy" id="265072"/>
    <lineage>
        <taxon>Bacteria</taxon>
        <taxon>Pseudomonadati</taxon>
        <taxon>Pseudomonadota</taxon>
        <taxon>Betaproteobacteria</taxon>
        <taxon>Nitrosomonadales</taxon>
        <taxon>Methylophilaceae</taxon>
        <taxon>Methylobacillus</taxon>
    </lineage>
</organism>
<feature type="chain" id="PRO_0000258557" description="Small ribosomal subunit protein uS10">
    <location>
        <begin position="1"/>
        <end position="102"/>
    </location>
</feature>
<proteinExistence type="inferred from homology"/>
<evidence type="ECO:0000255" key="1">
    <source>
        <dbReference type="HAMAP-Rule" id="MF_00508"/>
    </source>
</evidence>
<evidence type="ECO:0000305" key="2"/>
<gene>
    <name evidence="1" type="primary">rpsJ</name>
    <name type="ordered locus">Mfla_0278</name>
</gene>
<accession>Q1H4N8</accession>
<protein>
    <recommendedName>
        <fullName evidence="1">Small ribosomal subunit protein uS10</fullName>
    </recommendedName>
    <alternativeName>
        <fullName evidence="2">30S ribosomal protein S10</fullName>
    </alternativeName>
</protein>
<sequence>MAAQKIRIRLKAFDYRLIDQSALEIVETAKRTGAVVKGPVPLPTRIERFDILRSPHVNKTSRDQFEIRTHQRLMDIVDPTDKTVDALMKLDLPAGVDVEIKL</sequence>
<comment type="function">
    <text evidence="1">Involved in the binding of tRNA to the ribosomes.</text>
</comment>
<comment type="subunit">
    <text evidence="1">Part of the 30S ribosomal subunit.</text>
</comment>
<comment type="similarity">
    <text evidence="1">Belongs to the universal ribosomal protein uS10 family.</text>
</comment>
<dbReference type="EMBL" id="CP000284">
    <property type="protein sequence ID" value="ABE48549.1"/>
    <property type="molecule type" value="Genomic_DNA"/>
</dbReference>
<dbReference type="RefSeq" id="WP_011478646.1">
    <property type="nucleotide sequence ID" value="NC_007947.1"/>
</dbReference>
<dbReference type="SMR" id="Q1H4N8"/>
<dbReference type="STRING" id="265072.Mfla_0278"/>
<dbReference type="KEGG" id="mfa:Mfla_0278"/>
<dbReference type="eggNOG" id="COG0051">
    <property type="taxonomic scope" value="Bacteria"/>
</dbReference>
<dbReference type="HOGENOM" id="CLU_122625_1_3_4"/>
<dbReference type="OrthoDB" id="9804464at2"/>
<dbReference type="Proteomes" id="UP000002440">
    <property type="component" value="Chromosome"/>
</dbReference>
<dbReference type="GO" id="GO:1990904">
    <property type="term" value="C:ribonucleoprotein complex"/>
    <property type="evidence" value="ECO:0007669"/>
    <property type="project" value="UniProtKB-KW"/>
</dbReference>
<dbReference type="GO" id="GO:0005840">
    <property type="term" value="C:ribosome"/>
    <property type="evidence" value="ECO:0007669"/>
    <property type="project" value="UniProtKB-KW"/>
</dbReference>
<dbReference type="GO" id="GO:0003735">
    <property type="term" value="F:structural constituent of ribosome"/>
    <property type="evidence" value="ECO:0007669"/>
    <property type="project" value="InterPro"/>
</dbReference>
<dbReference type="GO" id="GO:0000049">
    <property type="term" value="F:tRNA binding"/>
    <property type="evidence" value="ECO:0007669"/>
    <property type="project" value="UniProtKB-UniRule"/>
</dbReference>
<dbReference type="GO" id="GO:0006412">
    <property type="term" value="P:translation"/>
    <property type="evidence" value="ECO:0007669"/>
    <property type="project" value="UniProtKB-UniRule"/>
</dbReference>
<dbReference type="FunFam" id="3.30.70.600:FF:000001">
    <property type="entry name" value="30S ribosomal protein S10"/>
    <property type="match status" value="1"/>
</dbReference>
<dbReference type="Gene3D" id="3.30.70.600">
    <property type="entry name" value="Ribosomal protein S10 domain"/>
    <property type="match status" value="1"/>
</dbReference>
<dbReference type="HAMAP" id="MF_00508">
    <property type="entry name" value="Ribosomal_uS10"/>
    <property type="match status" value="1"/>
</dbReference>
<dbReference type="InterPro" id="IPR001848">
    <property type="entry name" value="Ribosomal_uS10"/>
</dbReference>
<dbReference type="InterPro" id="IPR018268">
    <property type="entry name" value="Ribosomal_uS10_CS"/>
</dbReference>
<dbReference type="InterPro" id="IPR027486">
    <property type="entry name" value="Ribosomal_uS10_dom"/>
</dbReference>
<dbReference type="InterPro" id="IPR036838">
    <property type="entry name" value="Ribosomal_uS10_dom_sf"/>
</dbReference>
<dbReference type="NCBIfam" id="NF001861">
    <property type="entry name" value="PRK00596.1"/>
    <property type="match status" value="1"/>
</dbReference>
<dbReference type="NCBIfam" id="TIGR01049">
    <property type="entry name" value="rpsJ_bact"/>
    <property type="match status" value="1"/>
</dbReference>
<dbReference type="PANTHER" id="PTHR11700">
    <property type="entry name" value="30S RIBOSOMAL PROTEIN S10 FAMILY MEMBER"/>
    <property type="match status" value="1"/>
</dbReference>
<dbReference type="Pfam" id="PF00338">
    <property type="entry name" value="Ribosomal_S10"/>
    <property type="match status" value="1"/>
</dbReference>
<dbReference type="PRINTS" id="PR00971">
    <property type="entry name" value="RIBOSOMALS10"/>
</dbReference>
<dbReference type="SMART" id="SM01403">
    <property type="entry name" value="Ribosomal_S10"/>
    <property type="match status" value="1"/>
</dbReference>
<dbReference type="SUPFAM" id="SSF54999">
    <property type="entry name" value="Ribosomal protein S10"/>
    <property type="match status" value="1"/>
</dbReference>
<dbReference type="PROSITE" id="PS00361">
    <property type="entry name" value="RIBOSOMAL_S10"/>
    <property type="match status" value="1"/>
</dbReference>
<name>RS10_METFK</name>
<reference key="1">
    <citation type="submission" date="2006-03" db="EMBL/GenBank/DDBJ databases">
        <title>Complete sequence of Methylobacillus flagellatus KT.</title>
        <authorList>
            <consortium name="US DOE Joint Genome Institute"/>
            <person name="Copeland A."/>
            <person name="Lucas S."/>
            <person name="Lapidus A."/>
            <person name="Barry K."/>
            <person name="Detter J.C."/>
            <person name="Glavina del Rio T."/>
            <person name="Hammon N."/>
            <person name="Israni S."/>
            <person name="Dalin E."/>
            <person name="Tice H."/>
            <person name="Pitluck S."/>
            <person name="Brettin T."/>
            <person name="Bruce D."/>
            <person name="Han C."/>
            <person name="Tapia R."/>
            <person name="Saunders E."/>
            <person name="Gilna P."/>
            <person name="Schmutz J."/>
            <person name="Larimer F."/>
            <person name="Land M."/>
            <person name="Kyrpides N."/>
            <person name="Anderson I."/>
            <person name="Richardson P."/>
        </authorList>
    </citation>
    <scope>NUCLEOTIDE SEQUENCE [LARGE SCALE GENOMIC DNA]</scope>
    <source>
        <strain>ATCC 51484 / DSM 6875 / VKM B-1610 / KT</strain>
    </source>
</reference>
<keyword id="KW-1185">Reference proteome</keyword>
<keyword id="KW-0687">Ribonucleoprotein</keyword>
<keyword id="KW-0689">Ribosomal protein</keyword>